<sequence length="304" mass="33117">MGNHAGKRELNAEKASTNSETNRGESEKKRNLGELSRTTSEDNEVFGEADANQNNGTSSQDTAVTDSKRTADPKNAWQDAHPADPGSRPHLIRLFSRDAPGREDNTFKDRPSESDELQTIQEDSAATSESLDVMASQKRPSQRHGSKYLATASTMDHARHGFLPRHRDTGILDSIGRFFGGDRGAPKRGSGKDSHHPARTAHYGSLPQKSHGRTQDENPVVHFFKNIVTPRTPPPSQGKGRGLSLSRFSWGAEGQRPGFGYGGRASDYKSAHKGFKGVDAQGTLSKIFKLGGRDSRSGSPMARR</sequence>
<proteinExistence type="evidence at protein level"/>
<accession>P02686</accession>
<accession>A4FU54</accession>
<accession>A6NI84</accession>
<accession>A8MY86</accession>
<accession>A8MYL4</accession>
<accession>B3KY66</accession>
<accession>B7ZKS2</accession>
<accession>B7ZKS4</accession>
<accession>Q15337</accession>
<accession>Q15338</accession>
<accession>Q15339</accession>
<accession>Q15340</accession>
<accession>Q59GX3</accession>
<accession>Q65ZS4</accession>
<accession>Q6AI64</accession>
<accession>Q6FH37</accession>
<accession>Q6FI04</accession>
<accession>Q6PK23</accession>
<evidence type="ECO:0000250" key="1"/>
<evidence type="ECO:0000250" key="2">
    <source>
        <dbReference type="UniProtKB" id="P02687"/>
    </source>
</evidence>
<evidence type="ECO:0000250" key="3">
    <source>
        <dbReference type="UniProtKB" id="P02688"/>
    </source>
</evidence>
<evidence type="ECO:0000250" key="4">
    <source>
        <dbReference type="UniProtKB" id="P04370"/>
    </source>
</evidence>
<evidence type="ECO:0000250" key="5">
    <source>
        <dbReference type="UniProtKB" id="P25274"/>
    </source>
</evidence>
<evidence type="ECO:0000256" key="6">
    <source>
        <dbReference type="SAM" id="MobiDB-lite"/>
    </source>
</evidence>
<evidence type="ECO:0000269" key="7">
    <source>
    </source>
</evidence>
<evidence type="ECO:0000269" key="8">
    <source>
    </source>
</evidence>
<evidence type="ECO:0000269" key="9">
    <source>
    </source>
</evidence>
<evidence type="ECO:0000269" key="10">
    <source>
    </source>
</evidence>
<evidence type="ECO:0000269" key="11">
    <source>
    </source>
</evidence>
<evidence type="ECO:0000269" key="12">
    <source>
    </source>
</evidence>
<evidence type="ECO:0000269" key="13">
    <source>
    </source>
</evidence>
<evidence type="ECO:0000269" key="14">
    <source>
    </source>
</evidence>
<evidence type="ECO:0000269" key="15">
    <source>
    </source>
</evidence>
<evidence type="ECO:0000269" key="16">
    <source>
    </source>
</evidence>
<evidence type="ECO:0000269" key="17">
    <source>
    </source>
</evidence>
<evidence type="ECO:0000269" key="18">
    <source>
    </source>
</evidence>
<evidence type="ECO:0000303" key="19">
    <source>
    </source>
</evidence>
<evidence type="ECO:0000303" key="20">
    <source>
    </source>
</evidence>
<evidence type="ECO:0000303" key="21">
    <source>
    </source>
</evidence>
<evidence type="ECO:0000303" key="22">
    <source>
    </source>
</evidence>
<evidence type="ECO:0000303" key="23">
    <source>
    </source>
</evidence>
<evidence type="ECO:0000303" key="24">
    <source>
    </source>
</evidence>
<evidence type="ECO:0000303" key="25">
    <source ref="11"/>
</evidence>
<evidence type="ECO:0000303" key="26">
    <source ref="8"/>
</evidence>
<evidence type="ECO:0000305" key="27"/>
<evidence type="ECO:0007744" key="28">
    <source>
    </source>
</evidence>
<feature type="chain" id="PRO_0000158990" description="Myelin basic protein">
    <location>
        <begin position="1"/>
        <end position="304"/>
    </location>
</feature>
<feature type="region of interest" description="Disordered" evidence="6">
    <location>
        <begin position="1"/>
        <end position="146"/>
    </location>
</feature>
<feature type="region of interest" description="Induces experimental autoimmune encephalomyelitis (EAE) 1">
    <location>
        <begin position="179"/>
        <end position="222"/>
    </location>
</feature>
<feature type="region of interest" description="Disordered" evidence="6">
    <location>
        <begin position="180"/>
        <end position="249"/>
    </location>
</feature>
<feature type="region of interest" description="Induces experimental autoimmune encephalomyelitis (EAE) 2">
    <location>
        <begin position="246"/>
        <end position="256"/>
    </location>
</feature>
<feature type="compositionally biased region" description="Basic and acidic residues" evidence="6">
    <location>
        <begin position="1"/>
        <end position="12"/>
    </location>
</feature>
<feature type="compositionally biased region" description="Basic and acidic residues" evidence="6">
    <location>
        <begin position="22"/>
        <end position="32"/>
    </location>
</feature>
<feature type="compositionally biased region" description="Polar residues" evidence="6">
    <location>
        <begin position="51"/>
        <end position="65"/>
    </location>
</feature>
<feature type="compositionally biased region" description="Basic and acidic residues" evidence="6">
    <location>
        <begin position="95"/>
        <end position="113"/>
    </location>
</feature>
<feature type="compositionally biased region" description="Polar residues" evidence="6">
    <location>
        <begin position="117"/>
        <end position="130"/>
    </location>
</feature>
<feature type="site" description="Cleavage; by CTSG" evidence="10">
    <location>
        <begin position="224"/>
        <end position="225"/>
    </location>
</feature>
<feature type="site" description="Cleavage; by CTSG" evidence="10">
    <location>
        <begin position="248"/>
        <end position="249"/>
    </location>
</feature>
<feature type="modified residue" description="Phosphoserine" evidence="28">
    <location>
        <position position="96"/>
    </location>
</feature>
<feature type="modified residue" description="Phosphoserine" evidence="2">
    <location>
        <position position="141"/>
    </location>
</feature>
<feature type="modified residue" description="Phosphoserine" evidence="4">
    <location>
        <position position="146"/>
    </location>
</feature>
<feature type="modified residue" description="Phosphotyrosine" evidence="3">
    <location>
        <position position="148"/>
    </location>
</feature>
<feature type="modified residue" description="Phosphothreonine" evidence="3">
    <location>
        <position position="151"/>
    </location>
</feature>
<feature type="modified residue" description="Phosphoserine" evidence="4">
    <location>
        <position position="153"/>
    </location>
</feature>
<feature type="modified residue" description="Phosphothreonine" evidence="3">
    <location>
        <position position="154"/>
    </location>
</feature>
<feature type="modified residue" description="Citrulline; in form C8" evidence="14">
    <location>
        <position position="159"/>
    </location>
</feature>
<feature type="modified residue" description="Citrulline; in form C8" evidence="14">
    <location>
        <position position="165"/>
    </location>
</feature>
<feature type="modified residue" description="Citrulline" evidence="13">
    <location>
        <position position="167"/>
    </location>
</feature>
<feature type="modified residue" description="Phosphothreonine" evidence="4">
    <location>
        <position position="169"/>
    </location>
</feature>
<feature type="modified residue" description="Phosphoserine" evidence="4">
    <location>
        <position position="174"/>
    </location>
</feature>
<feature type="modified residue" description="Omega-N-methylarginine" evidence="4">
    <location>
        <position position="177"/>
    </location>
</feature>
<feature type="modified residue" description="Omega-N-methylarginine" evidence="4">
    <location>
        <position position="183"/>
    </location>
</feature>
<feature type="modified residue" description="Phosphoserine" evidence="2">
    <location>
        <position position="190"/>
    </location>
</feature>
<feature type="modified residue" description="Citrulline" evidence="13">
    <location>
        <position position="199"/>
    </location>
</feature>
<feature type="modified residue" description="Phosphotyrosine" evidence="4">
    <location>
        <position position="203"/>
    </location>
</feature>
<feature type="modified residue" description="Phosphoserine" evidence="4">
    <location>
        <position position="210"/>
    </location>
</feature>
<feature type="modified residue" description="Phosphothreonine" evidence="4">
    <location>
        <position position="214"/>
    </location>
</feature>
<feature type="modified residue" description="Phosphothreonine" evidence="3">
    <location>
        <position position="229"/>
    </location>
</feature>
<feature type="modified residue" description="Citrulline" evidence="13">
    <location>
        <position position="231"/>
    </location>
</feature>
<feature type="modified residue" description="Phosphothreonine" evidence="2">
    <location>
        <position position="232"/>
    </location>
</feature>
<feature type="modified residue" description="Deamidated glutamine" evidence="1">
    <location>
        <position position="237"/>
    </location>
</feature>
<feature type="modified residue" description="Omega-N-methylarginine; alternate" evidence="15">
    <location>
        <position position="241"/>
    </location>
</feature>
<feature type="modified residue" description="Symmetric dimethylarginine; alternate" evidence="15">
    <location>
        <position position="241"/>
    </location>
</feature>
<feature type="modified residue" description="Phosphoserine" evidence="5">
    <location>
        <position position="249"/>
    </location>
</feature>
<feature type="modified residue" description="Citrulline; in form C8" evidence="14">
    <location>
        <position position="256"/>
    </location>
</feature>
<feature type="modified residue" description="Citrulline; in form C8" evidence="13 14">
    <location>
        <position position="264"/>
    </location>
</feature>
<feature type="modified residue" description="Deamidated glutamine" evidence="1">
    <location>
        <position position="281"/>
    </location>
</feature>
<feature type="modified residue" description="Citrulline; in form C8" evidence="14">
    <location>
        <position position="293"/>
    </location>
</feature>
<feature type="modified residue" description="Phosphoserine" evidence="2">
    <location>
        <position position="295"/>
    </location>
</feature>
<feature type="modified residue" description="Citrulline" evidence="13">
    <location>
        <position position="296"/>
    </location>
</feature>
<feature type="modified residue" description="Phosphoserine; by UHMK1" evidence="7">
    <location>
        <position position="299"/>
    </location>
</feature>
<feature type="modified residue" description="Citrulline" evidence="13">
    <location>
        <position position="303"/>
    </location>
</feature>
<feature type="modified residue" description="Citrulline; in form C8" evidence="14">
    <location>
        <position position="304"/>
    </location>
</feature>
<feature type="splice variant" id="VSP_003308" description="In isoform 3, isoform 4, isoform 5 and isoform 6." evidence="19 20 21 22 23 24 26">
    <location>
        <begin position="1"/>
        <end position="133"/>
    </location>
</feature>
<feature type="splice variant" id="VSP_003309" description="In isoform 3 and isoform 4." evidence="21 23">
    <original>K</original>
    <variation>KVPWLKPGRSPLPSHARSQPGLCNMYK</variation>
    <location>
        <position position="192"/>
    </location>
</feature>
<feature type="splice variant" id="VSP_003311" description="In isoform 2." evidence="20 25">
    <original>DSHHPARTAHYGSLPQKSHGRTQDENPVVHFFKNIVTPRTPPPSQGKGRGLSLSRFSWGAEGQRPGFGYGGRASDYKSAHKGFKGVDAQGTLSKIFKLGGRDSRSGSPMARR</original>
    <variation>VSSEE</variation>
    <location>
        <begin position="193"/>
        <end position="304"/>
    </location>
</feature>
<feature type="splice variant" id="VSP_003310" description="In isoform 4 and isoform 6." evidence="20 22 23 26">
    <location>
        <begin position="240"/>
        <end position="250"/>
    </location>
</feature>
<feature type="sequence conflict" description="In Ref. 8; CAG38771." evidence="27" ref="8">
    <original>P</original>
    <variation>T</variation>
    <location>
        <position position="300"/>
    </location>
</feature>
<feature type="initiator methionine" description="Removed" evidence="17">
    <location sequence="P02686-3">
        <position position="1"/>
    </location>
</feature>
<feature type="modified residue" description="N-acetylalanine" evidence="17">
    <location sequence="P02686-3">
        <position position="2"/>
    </location>
</feature>
<feature type="initiator methionine" description="Removed" evidence="17">
    <location sequence="P02686-4">
        <position position="1"/>
    </location>
</feature>
<feature type="modified residue" description="N-acetylalanine" evidence="17">
    <location sequence="P02686-4">
        <position position="2"/>
    </location>
</feature>
<feature type="initiator methionine" description="Removed" evidence="17">
    <location sequence="P02686-5">
        <position position="1"/>
    </location>
</feature>
<feature type="modified residue" description="N-acetylalanine" evidence="17">
    <location sequence="P02686-5">
        <position position="2"/>
    </location>
</feature>
<feature type="initiator methionine" description="Removed" evidence="17">
    <location sequence="P02686-6">
        <position position="1"/>
    </location>
</feature>
<feature type="modified residue" description="N-acetylalanine" evidence="17">
    <location sequence="P02686-6">
        <position position="2"/>
    </location>
</feature>
<gene>
    <name type="primary">MBP</name>
</gene>
<name>MBP_HUMAN</name>
<reference key="1">
    <citation type="journal article" date="1971" name="Biochem. J.">
        <title>Amino acid sequence of the encephalitogenic basic protein from human myelin.</title>
        <authorList>
            <person name="Carnegie P.R."/>
        </authorList>
    </citation>
    <scope>PROTEIN SEQUENCE (ISOFORM 5)</scope>
</reference>
<reference key="2">
    <citation type="journal article" date="1986" name="J. Neurosci. Res.">
        <title>Isolation and characterization of a cDNA coding for a novel human 17.3K myelin basic protein (MBP) variant.</title>
        <authorList>
            <person name="Roth H.J."/>
            <person name="Kronquist K.E."/>
            <person name="Pretorius P.J."/>
            <person name="Crandall B.F."/>
            <person name="Campagnoni A.T."/>
        </authorList>
    </citation>
    <scope>NUCLEOTIDE SEQUENCE [MRNA] (ISOFORM 6)</scope>
    <source>
        <tissue>Embryonic spinal cord</tissue>
    </source>
</reference>
<reference key="3">
    <citation type="journal article" date="1986" name="Proc. Natl. Acad. Sci. U.S.A.">
        <title>Identification of three forms of human myelin basic protein by cDNA cloning.</title>
        <authorList>
            <person name="Kamholz J."/>
            <person name="de Ferra F."/>
            <person name="Puckett C."/>
            <person name="Lazzarini R.A."/>
        </authorList>
    </citation>
    <scope>NUCLEOTIDE SEQUENCE [MRNA] (ISOFORMS 3 AND 5)</scope>
</reference>
<reference key="4">
    <citation type="journal article" date="1987" name="J. Neurosci. Res.">
        <title>Evidence for the expression of four myelin basic protein variants in the developing human spinal cord through cDNA cloning.</title>
        <authorList>
            <person name="Roth H.J."/>
            <person name="Kronquist K.E."/>
            <person name="de Rosbo N."/>
            <person name="Crandall B.F."/>
            <person name="Campagnoni A.T."/>
        </authorList>
    </citation>
    <scope>NUCLEOTIDE SEQUENCE [MRNA] (ISOFORMS 3; 4; 5 AND 6)</scope>
    <source>
        <tissue>Embryonic spinal cord</tissue>
    </source>
</reference>
<reference key="5">
    <citation type="journal article" date="1989" name="Biol. Chem. Hoppe-Seyler">
        <title>The organization of the human myelin basic protein gene. Comparison with the mouse gene.</title>
        <authorList>
            <person name="Streicher R."/>
            <person name="Stoffel W."/>
        </authorList>
    </citation>
    <scope>NUCLEOTIDE SEQUENCE [GENOMIC DNA] (ISOFORMS 3; 4; 5 AND 6)</scope>
</reference>
<reference key="6">
    <citation type="journal article" date="1993" name="Proc. Natl. Acad. Sci. U.S.A.">
        <title>The human myelin basic protein gene is included within a 179-kilobase transcription unit: expression in the immune and central nervous systems.</title>
        <authorList>
            <person name="Pribyl T.M."/>
            <person name="Campagnoni C.W."/>
            <person name="Kampf K."/>
            <person name="Kashima T."/>
            <person name="Handley V.W."/>
            <person name="McMahon J."/>
            <person name="Campagnoni A.T."/>
        </authorList>
    </citation>
    <scope>NUCLEOTIDE SEQUENCE [GENOMIC DNA] (ISOFORMS 1 AND 2)</scope>
    <scope>TISSUE SPECIFICITY</scope>
    <source>
        <tissue>Brain</tissue>
    </source>
</reference>
<reference key="7">
    <citation type="journal article" date="1995" name="Mol. Immunol.">
        <title>Purification of immunologically active recombinant 21.5 kDa isoform of human myelin basic protein.</title>
        <authorList>
            <person name="Nye S.H."/>
            <person name="Pelfrey C.M."/>
            <person name="Burkwit J.J."/>
            <person name="Voskuhl R.R."/>
            <person name="Lenardo M.J."/>
            <person name="Mueller J.P."/>
        </authorList>
    </citation>
    <scope>NUCLEOTIDE SEQUENCE [GENOMIC DNA] (ISOFORM 3)</scope>
    <scope>FUNCTION</scope>
    <scope>DIMERIZATION</scope>
    <scope>MUTAGENESIS</scope>
</reference>
<reference key="8">
    <citation type="submission" date="2004-06" db="EMBL/GenBank/DDBJ databases">
        <title>Cloning of human full open reading frames in Gateway(TM) system entry vector (pDONR201).</title>
        <authorList>
            <person name="Ebert L."/>
            <person name="Schick M."/>
            <person name="Neubert P."/>
            <person name="Schatten R."/>
            <person name="Henze S."/>
            <person name="Korn B."/>
        </authorList>
    </citation>
    <scope>NUCLEOTIDE SEQUENCE [LARGE SCALE MRNA] (ISOFORM 6)</scope>
</reference>
<reference key="9">
    <citation type="journal article" date="2007" name="BMC Genomics">
        <title>The full-ORF clone resource of the German cDNA consortium.</title>
        <authorList>
            <person name="Bechtel S."/>
            <person name="Rosenfelder H."/>
            <person name="Duda A."/>
            <person name="Schmidt C.P."/>
            <person name="Ernst U."/>
            <person name="Wellenreuther R."/>
            <person name="Mehrle A."/>
            <person name="Schuster C."/>
            <person name="Bahr A."/>
            <person name="Bloecker H."/>
            <person name="Heubner D."/>
            <person name="Hoerlein A."/>
            <person name="Michel G."/>
            <person name="Wedler H."/>
            <person name="Koehrer K."/>
            <person name="Ottenwaelder B."/>
            <person name="Poustka A."/>
            <person name="Wiemann S."/>
            <person name="Schupp I."/>
        </authorList>
    </citation>
    <scope>NUCLEOTIDE SEQUENCE [LARGE SCALE MRNA]</scope>
    <source>
        <tissue>Amygdala</tissue>
    </source>
</reference>
<reference key="10">
    <citation type="journal article" date="2004" name="Nat. Genet.">
        <title>Complete sequencing and characterization of 21,243 full-length human cDNAs.</title>
        <authorList>
            <person name="Ota T."/>
            <person name="Suzuki Y."/>
            <person name="Nishikawa T."/>
            <person name="Otsuki T."/>
            <person name="Sugiyama T."/>
            <person name="Irie R."/>
            <person name="Wakamatsu A."/>
            <person name="Hayashi K."/>
            <person name="Sato H."/>
            <person name="Nagai K."/>
            <person name="Kimura K."/>
            <person name="Makita H."/>
            <person name="Sekine M."/>
            <person name="Obayashi M."/>
            <person name="Nishi T."/>
            <person name="Shibahara T."/>
            <person name="Tanaka T."/>
            <person name="Ishii S."/>
            <person name="Yamamoto J."/>
            <person name="Saito K."/>
            <person name="Kawai Y."/>
            <person name="Isono Y."/>
            <person name="Nakamura Y."/>
            <person name="Nagahari K."/>
            <person name="Murakami K."/>
            <person name="Yasuda T."/>
            <person name="Iwayanagi T."/>
            <person name="Wagatsuma M."/>
            <person name="Shiratori A."/>
            <person name="Sudo H."/>
            <person name="Hosoiri T."/>
            <person name="Kaku Y."/>
            <person name="Kodaira H."/>
            <person name="Kondo H."/>
            <person name="Sugawara M."/>
            <person name="Takahashi M."/>
            <person name="Kanda K."/>
            <person name="Yokoi T."/>
            <person name="Furuya T."/>
            <person name="Kikkawa E."/>
            <person name="Omura Y."/>
            <person name="Abe K."/>
            <person name="Kamihara K."/>
            <person name="Katsuta N."/>
            <person name="Sato K."/>
            <person name="Tanikawa M."/>
            <person name="Yamazaki M."/>
            <person name="Ninomiya K."/>
            <person name="Ishibashi T."/>
            <person name="Yamashita H."/>
            <person name="Murakawa K."/>
            <person name="Fujimori K."/>
            <person name="Tanai H."/>
            <person name="Kimata M."/>
            <person name="Watanabe M."/>
            <person name="Hiraoka S."/>
            <person name="Chiba Y."/>
            <person name="Ishida S."/>
            <person name="Ono Y."/>
            <person name="Takiguchi S."/>
            <person name="Watanabe S."/>
            <person name="Yosida M."/>
            <person name="Hotuta T."/>
            <person name="Kusano J."/>
            <person name="Kanehori K."/>
            <person name="Takahashi-Fujii A."/>
            <person name="Hara H."/>
            <person name="Tanase T.-O."/>
            <person name="Nomura Y."/>
            <person name="Togiya S."/>
            <person name="Komai F."/>
            <person name="Hara R."/>
            <person name="Takeuchi K."/>
            <person name="Arita M."/>
            <person name="Imose N."/>
            <person name="Musashino K."/>
            <person name="Yuuki H."/>
            <person name="Oshima A."/>
            <person name="Sasaki N."/>
            <person name="Aotsuka S."/>
            <person name="Yoshikawa Y."/>
            <person name="Matsunawa H."/>
            <person name="Ichihara T."/>
            <person name="Shiohata N."/>
            <person name="Sano S."/>
            <person name="Moriya S."/>
            <person name="Momiyama H."/>
            <person name="Satoh N."/>
            <person name="Takami S."/>
            <person name="Terashima Y."/>
            <person name="Suzuki O."/>
            <person name="Nakagawa S."/>
            <person name="Senoh A."/>
            <person name="Mizoguchi H."/>
            <person name="Goto Y."/>
            <person name="Shimizu F."/>
            <person name="Wakebe H."/>
            <person name="Hishigaki H."/>
            <person name="Watanabe T."/>
            <person name="Sugiyama A."/>
            <person name="Takemoto M."/>
            <person name="Kawakami B."/>
            <person name="Yamazaki M."/>
            <person name="Watanabe K."/>
            <person name="Kumagai A."/>
            <person name="Itakura S."/>
            <person name="Fukuzumi Y."/>
            <person name="Fujimori Y."/>
            <person name="Komiyama M."/>
            <person name="Tashiro H."/>
            <person name="Tanigami A."/>
            <person name="Fujiwara T."/>
            <person name="Ono T."/>
            <person name="Yamada K."/>
            <person name="Fujii Y."/>
            <person name="Ozaki K."/>
            <person name="Hirao M."/>
            <person name="Ohmori Y."/>
            <person name="Kawabata A."/>
            <person name="Hikiji T."/>
            <person name="Kobatake N."/>
            <person name="Inagaki H."/>
            <person name="Ikema Y."/>
            <person name="Okamoto S."/>
            <person name="Okitani R."/>
            <person name="Kawakami T."/>
            <person name="Noguchi S."/>
            <person name="Itoh T."/>
            <person name="Shigeta K."/>
            <person name="Senba T."/>
            <person name="Matsumura K."/>
            <person name="Nakajima Y."/>
            <person name="Mizuno T."/>
            <person name="Morinaga M."/>
            <person name="Sasaki M."/>
            <person name="Togashi T."/>
            <person name="Oyama M."/>
            <person name="Hata H."/>
            <person name="Watanabe M."/>
            <person name="Komatsu T."/>
            <person name="Mizushima-Sugano J."/>
            <person name="Satoh T."/>
            <person name="Shirai Y."/>
            <person name="Takahashi Y."/>
            <person name="Nakagawa K."/>
            <person name="Okumura K."/>
            <person name="Nagase T."/>
            <person name="Nomura N."/>
            <person name="Kikuchi H."/>
            <person name="Masuho Y."/>
            <person name="Yamashita R."/>
            <person name="Nakai K."/>
            <person name="Yada T."/>
            <person name="Nakamura Y."/>
            <person name="Ohara O."/>
            <person name="Isogai T."/>
            <person name="Sugano S."/>
        </authorList>
    </citation>
    <scope>NUCLEOTIDE SEQUENCE [LARGE SCALE MRNA] (ISOFORM 5)</scope>
    <source>
        <tissue>Hippocampus</tissue>
        <tissue>Subthalamic nucleus</tissue>
    </source>
</reference>
<reference key="11">
    <citation type="submission" date="2005-03" db="EMBL/GenBank/DDBJ databases">
        <authorList>
            <person name="Totoki Y."/>
            <person name="Toyoda A."/>
            <person name="Takeda T."/>
            <person name="Sakaki Y."/>
            <person name="Tanaka A."/>
            <person name="Yokoyama S."/>
            <person name="Ohara O."/>
            <person name="Nagase T."/>
            <person name="Kikuno R.F."/>
        </authorList>
    </citation>
    <scope>NUCLEOTIDE SEQUENCE [LARGE SCALE MRNA] (ISOFORM 2)</scope>
    <source>
        <tissue>Brain</tissue>
    </source>
</reference>
<reference key="12">
    <citation type="journal article" date="2005" name="Nature">
        <title>DNA sequence and analysis of human chromosome 18.</title>
        <authorList>
            <person name="Nusbaum C."/>
            <person name="Zody M.C."/>
            <person name="Borowsky M.L."/>
            <person name="Kamal M."/>
            <person name="Kodira C.D."/>
            <person name="Taylor T.D."/>
            <person name="Whittaker C.A."/>
            <person name="Chang J.L."/>
            <person name="Cuomo C.A."/>
            <person name="Dewar K."/>
            <person name="FitzGerald M.G."/>
            <person name="Yang X."/>
            <person name="Abouelleil A."/>
            <person name="Allen N.R."/>
            <person name="Anderson S."/>
            <person name="Bloom T."/>
            <person name="Bugalter B."/>
            <person name="Butler J."/>
            <person name="Cook A."/>
            <person name="DeCaprio D."/>
            <person name="Engels R."/>
            <person name="Garber M."/>
            <person name="Gnirke A."/>
            <person name="Hafez N."/>
            <person name="Hall J.L."/>
            <person name="Norman C.H."/>
            <person name="Itoh T."/>
            <person name="Jaffe D.B."/>
            <person name="Kuroki Y."/>
            <person name="Lehoczky J."/>
            <person name="Lui A."/>
            <person name="Macdonald P."/>
            <person name="Mauceli E."/>
            <person name="Mikkelsen T.S."/>
            <person name="Naylor J.W."/>
            <person name="Nicol R."/>
            <person name="Nguyen C."/>
            <person name="Noguchi H."/>
            <person name="O'Leary S.B."/>
            <person name="Piqani B."/>
            <person name="Smith C.L."/>
            <person name="Talamas J.A."/>
            <person name="Topham K."/>
            <person name="Totoki Y."/>
            <person name="Toyoda A."/>
            <person name="Wain H.M."/>
            <person name="Young S.K."/>
            <person name="Zeng Q."/>
            <person name="Zimmer A.R."/>
            <person name="Fujiyama A."/>
            <person name="Hattori M."/>
            <person name="Birren B.W."/>
            <person name="Sakaki Y."/>
            <person name="Lander E.S."/>
        </authorList>
    </citation>
    <scope>NUCLEOTIDE SEQUENCE [LARGE SCALE GENOMIC DNA]</scope>
</reference>
<reference key="13">
    <citation type="journal article" date="2004" name="Genome Res.">
        <title>The status, quality, and expansion of the NIH full-length cDNA project: the Mammalian Gene Collection (MGC).</title>
        <authorList>
            <consortium name="The MGC Project Team"/>
        </authorList>
    </citation>
    <scope>NUCLEOTIDE SEQUENCE [LARGE SCALE MRNA] (ISOFORMS 2; 5 AND 6)</scope>
    <source>
        <tissue>Brain</tissue>
        <tissue>Lung</tissue>
        <tissue>Skin</tissue>
    </source>
</reference>
<reference key="14">
    <citation type="journal article" date="1990" name="Genomics">
        <title>Repetitive DNA (TGGA)n 5' to the human myelin basic protein gene: a new form of oligonucleotide repetitive sequence showing length polymorphism.</title>
        <authorList>
            <person name="Boylan K.B."/>
            <person name="Ayres T.M."/>
            <person name="Popko B."/>
            <person name="Takahashi N."/>
            <person name="Hood L.E."/>
            <person name="Prusiner S.B."/>
        </authorList>
    </citation>
    <scope>NUCLEOTIDE SEQUENCE [GENOMIC DNA] OF 135-192</scope>
</reference>
<reference key="15">
    <citation type="journal article" date="1986" name="J. Neurochem.">
        <title>Analysis of the primary sequence of human myelin basic protein peptides 1-44 and 90-170 by fast atom bombardment mass spectrometry.</title>
        <authorList>
            <person name="Scoble H.A."/>
            <person name="Whitaker J.N."/>
            <person name="Biemann K."/>
        </authorList>
    </citation>
    <scope>PROTEIN SEQUENCE OF 135-178 AND 224-304 (ISOFORM 3)</scope>
    <scope>IDENTIFICATION BY MASS SPECTROMETRY</scope>
</reference>
<reference key="16">
    <citation type="journal article" date="1989" name="J. Biol. Chem.">
        <title>The isolation, characterization, and lipid-aggregating properties of a citrulline containing myelin basic protein.</title>
        <authorList>
            <person name="Wood D.D."/>
            <person name="Moscarello M.A."/>
        </authorList>
    </citation>
    <scope>PROTEIN SEQUENCE OF 148-304 (ISOFORM 5)</scope>
    <scope>CITRULLINATION AT ARG-159; ARG-165; ARG-256; ARG-264; ARG-293 AND ARG-304</scope>
    <source>
        <tissue>Brain</tissue>
    </source>
</reference>
<reference key="17">
    <citation type="journal article" date="1995" name="Arch. Biochem. Biophys.">
        <title>The isolation and characterization of four myelin basic proteins from the unbound fraction during CM52 chromatography.</title>
        <authorList>
            <person name="Boulias C."/>
            <person name="Pang H."/>
            <person name="Mastronardi F."/>
            <person name="Moscarello M.A."/>
        </authorList>
    </citation>
    <scope>PROTEIN SEQUENCE OF 156-172 AND 302-304</scope>
    <scope>CHARACTERIZATION OF C8</scope>
    <source>
        <tissue>Brain</tissue>
    </source>
</reference>
<reference key="18">
    <citation type="journal article" date="1984" name="J. Biol. Chem.">
        <title>Amino acid sequence of human myelin basic protein peptide 45-89 as determined by mass spectrometry.</title>
        <authorList>
            <person name="Gibson B.W."/>
            <person name="Gilliom R.D."/>
            <person name="Whitaker J.N."/>
            <person name="Biemann K."/>
        </authorList>
    </citation>
    <scope>PROTEIN SEQUENCE OF 179-223 (ISOFORM 5)</scope>
    <scope>IDENTIFICATION BY MASS SPECTROMETRY</scope>
</reference>
<reference key="19">
    <citation type="journal article" date="1971" name="J. Biol. Chem.">
        <title>Encephalitogenic fragment of myelin basic protein. Amino acid sequence of bovine, rabbit, guinea pig, monkey, and human fragments.</title>
        <authorList>
            <person name="Shapira R."/>
            <person name="McKneally S.S."/>
            <person name="Chou F."/>
            <person name="Kibler R.F."/>
        </authorList>
    </citation>
    <scope>PROTEIN SEQUENCE OF 179-222 (ISOFORM 5)</scope>
    <scope>SEQUENCE REVISION</scope>
</reference>
<reference key="20">
    <citation type="journal article" date="1970" name="J. Immunol.">
        <title>Immunologic properties of the main encephalitogenic peptide from the basic protein of human myelin.</title>
        <authorList>
            <person name="Lennon V.A."/>
            <person name="Wilks A.V."/>
            <person name="Carnegie P.R."/>
        </authorList>
    </citation>
    <scope>PROTEIN SEQUENCE OF 246-269 (ISOFORM 3)</scope>
    <scope>ENCEPHALITOGENIC PEPTIDE</scope>
</reference>
<reference key="21">
    <citation type="journal article" date="1993" name="Biochem. Biophys. Res. Commun.">
        <title>Leukocyte gelatinase B cleavage releases encephalitogens from human myelin basic protein.</title>
        <authorList>
            <person name="Proost P."/>
            <person name="Van Damme J."/>
            <person name="Opdenakker G."/>
        </authorList>
    </citation>
    <scope>PARTIAL PROTEIN SEQUENCE</scope>
    <source>
        <tissue>Brain</tissue>
    </source>
</reference>
<reference key="22">
    <citation type="journal article" date="1971" name="Biochem. J.">
        <title>Isolation and partial characterization of methylated arginines from the encephalitogenic basic protein of myelin.</title>
        <authorList>
            <person name="Baldwin G.S."/>
            <person name="Carnegie P.R."/>
        </authorList>
    </citation>
    <scope>METHYLATION AT ARG-241</scope>
</reference>
<reference key="23">
    <citation type="journal article" date="1998" name="J. Biol. Chem.">
        <title>Selective activation of p38 mitogen-activated protein (MAP) kinase isoforms by the MAP kinase kinases MKK3 and MKK6.</title>
        <authorList>
            <person name="Enslen H."/>
            <person name="Raingeaud J."/>
            <person name="Davis R.J."/>
        </authorList>
    </citation>
    <scope>PHOSPHORYLATION BY MAPK11; MAPK12 AND MAPK14</scope>
</reference>
<reference key="24">
    <citation type="journal article" date="2000" name="Eur. J. Biochem.">
        <title>Specific Ser-Pro phosphorylation by the RNA-recognition motif containing kinase KIS.</title>
        <authorList>
            <person name="Maucuer A."/>
            <person name="Le Caer J.P."/>
            <person name="Manceau V."/>
            <person name="Sobel A."/>
        </authorList>
    </citation>
    <scope>PHOSPHORYLATION AT SER-299 BY UMHK1</scope>
</reference>
<reference key="25">
    <citation type="journal article" date="2000" name="J. Biol. Chem.">
        <title>PSK, a novel STE20-like kinase derived from prostatic carcinoma that activates the JNK MAPK pathway and regulates actin cytoskeletal organisation.</title>
        <authorList>
            <person name="Moore T.M."/>
            <person name="Garg R."/>
            <person name="Johnson C."/>
            <person name="Coptcoat M.J."/>
            <person name="Ridley A.J."/>
            <person name="Morris J.D.H."/>
        </authorList>
    </citation>
    <scope>PHOSPHORYLATION BY TAOK2</scope>
</reference>
<reference key="26">
    <citation type="journal article" date="2004" name="J. Immunol.">
        <title>Cathepsin G, and not the asparagine-specific endoprotease, controls the processing of myelin basic protein in lysosomes from human B lymphocytes.</title>
        <authorList>
            <person name="Burster T."/>
            <person name="Beck A."/>
            <person name="Tolosa E."/>
            <person name="Marin-Esteban V."/>
            <person name="Roetzschke O."/>
            <person name="Falk K."/>
            <person name="Lautwein A."/>
            <person name="Reich M."/>
            <person name="Brandenburg J."/>
            <person name="Schwarz G."/>
            <person name="Wiendl H."/>
            <person name="Melms A."/>
            <person name="Lehmann R."/>
            <person name="Stevanovic S."/>
            <person name="Kalbacher H."/>
            <person name="Driessen C."/>
        </authorList>
    </citation>
    <scope>PROTEOLYTIC CLEAVAGE</scope>
</reference>
<reference key="27">
    <citation type="journal article" date="2005" name="Mol. Cell">
        <title>Involvement of MINK, a Ste20 family kinase, in Ras oncogene-induced growth arrest in human ovarian surface epithelial cells.</title>
        <authorList>
            <person name="Nicke B."/>
            <person name="Bastien J."/>
            <person name="Khanna S.J."/>
            <person name="Warne P.H."/>
            <person name="Cowling V."/>
            <person name="Cook S.J."/>
            <person name="Peters G."/>
            <person name="Delpuech O."/>
            <person name="Schulze A."/>
            <person name="Berns K."/>
            <person name="Mullenders J."/>
            <person name="Beijersbergen R.L."/>
            <person name="Bernards R."/>
            <person name="Ganesan T.S."/>
            <person name="Downward J."/>
            <person name="Hancock D.C."/>
        </authorList>
    </citation>
    <scope>PHOSPHORYLATION BY MINK1</scope>
</reference>
<reference key="28">
    <citation type="journal article" date="2006" name="FEBS J.">
        <title>The subcellular localization of vaccinia-related kinase-2 (VRK2) isoforms determines their different effect on p53 stability in tumour cell lines.</title>
        <authorList>
            <person name="Blanco S."/>
            <person name="Klimcakova L."/>
            <person name="Vega F.M."/>
            <person name="Lazo P.A."/>
        </authorList>
    </citation>
    <scope>PHOSPHORYLATION BY VRK2</scope>
</reference>
<reference key="29">
    <citation type="journal article" date="2007" name="J. Biol. Chem.">
        <title>Prostate-derived sterile 20-like kinase 1-alpha induces apoptosis. JNK- and caspase-dependent nuclear localization is a requirement for membrane blebbing.</title>
        <authorList>
            <person name="Zihni C."/>
            <person name="Mitsopoulos C."/>
            <person name="Tavares I.A."/>
            <person name="Baum B."/>
            <person name="Ridley A.J."/>
            <person name="Morris J.D."/>
        </authorList>
    </citation>
    <scope>PHOSPHORYLATION BY TAOK2</scope>
</reference>
<reference key="30">
    <citation type="journal article" date="2009" name="Sci. Signal.">
        <title>Quantitative phosphoproteomic analysis of T cell receptor signaling reveals system-wide modulation of protein-protein interactions.</title>
        <authorList>
            <person name="Mayya V."/>
            <person name="Lundgren D.H."/>
            <person name="Hwang S.-I."/>
            <person name="Rezaul K."/>
            <person name="Wu L."/>
            <person name="Eng J.K."/>
            <person name="Rodionov V."/>
            <person name="Han D.K."/>
        </authorList>
    </citation>
    <scope>IDENTIFICATION BY MASS SPECTROMETRY [LARGE SCALE ANALYSIS]</scope>
    <source>
        <tissue>Leukemic T-cell</tissue>
    </source>
</reference>
<reference key="31">
    <citation type="journal article" date="2012" name="Biochem. Biophys. Res. Commun.">
        <title>The 21.5-kDa isoform of myelin basic protein has a non-traditional PY-nuclear-localization signal.</title>
        <authorList>
            <person name="Smith G.S."/>
            <person name="Seymour L.V."/>
            <person name="Boggs J.M."/>
            <person name="Harauz G."/>
        </authorList>
    </citation>
    <scope>SUBCELLULAR LOCATION (ISOFORM 3)</scope>
</reference>
<reference key="32">
    <citation type="journal article" date="2013" name="J. Proteome Res.">
        <title>Toward a comprehensive characterization of a human cancer cell phosphoproteome.</title>
        <authorList>
            <person name="Zhou H."/>
            <person name="Di Palma S."/>
            <person name="Preisinger C."/>
            <person name="Peng M."/>
            <person name="Polat A.N."/>
            <person name="Heck A.J."/>
            <person name="Mohammed S."/>
        </authorList>
    </citation>
    <scope>PHOSPHORYLATION [LARGE SCALE ANALYSIS] AT SER-96</scope>
    <scope>IDENTIFICATION BY MASS SPECTROMETRY [LARGE SCALE ANALYSIS]</scope>
    <source>
        <tissue>Cervix carcinoma</tissue>
    </source>
</reference>
<reference key="33">
    <citation type="journal article" date="2013" name="Proteomics">
        <title>Identification and Characterization of citrulline-modified brain proteins by combining HCD and CID fragmentation.</title>
        <authorList>
            <person name="Jin Z."/>
            <person name="Fu Z."/>
            <person name="Yang J."/>
            <person name="Troncosco J."/>
            <person name="Everett A.D."/>
            <person name="Van Eyk J.E."/>
        </authorList>
    </citation>
    <scope>CITRULLINATION AT ARG-167; ARG-199; ARG-231; ARG-264; ARG-296 AND ARG-303</scope>
</reference>
<reference key="34">
    <citation type="journal article" date="1995" name="Eur. J. Biochem.">
        <title>Conformation of a tetradecapeptide epitope of myelin basic protein.</title>
        <authorList>
            <person name="Mendz G.L."/>
            <person name="Barden J.A."/>
            <person name="Martenson R.E."/>
        </authorList>
    </citation>
    <scope>STRUCTURE BY NMR OF 135-148</scope>
    <scope>CLEAVAGE OF INITIATOR METHIONINE (ISOFORMS 3; 4; 5 AND 6)</scope>
    <scope>ACETYLATION AT ALA-2 (ISOFORMS 3; 4; 5 AND 6)</scope>
</reference>
<reference key="35">
    <citation type="journal article" date="1997" name="J. Biol. Chem.">
        <title>Three-dimensional structure of myelin basic protein. II. Molecular modeling and considerations of predicted structures in multiple sclerosis.</title>
        <authorList>
            <person name="Ridsdale R.A."/>
            <person name="Beniac D.R."/>
            <person name="Tompkins T.A."/>
            <person name="Moscarello M.A."/>
            <person name="Harauz G."/>
        </authorList>
    </citation>
    <scope>3D-STRUCTURE MODELING OF 135-279 (ISOFORM 5)</scope>
</reference>
<reference key="36">
    <citation type="journal article" date="2000" name="J. Mol. Biol.">
        <title>Structural basis for the binding of an immunodominant peptide from myelin basic protein in different registers by two HLA-DR2 proteins.</title>
        <authorList>
            <person name="Li Y."/>
            <person name="Li H."/>
            <person name="Martin R."/>
            <person name="Mariuzza R.A."/>
        </authorList>
    </citation>
    <scope>X-RAY CRYSTALLOGRAPHY (1.9 ANGSTROMS) OF 218-237 IN COMPLEX WITH HLA-DRA/HLA-DRB5 HETERODIMER</scope>
</reference>
<reference key="37">
    <citation type="journal article" date="2001" name="Immunity">
        <title>Crystal structure of a superantigen bound to the high-affinity, zinc-dependent site on MHC class II.</title>
        <authorList>
            <person name="Li Y."/>
            <person name="Li H."/>
            <person name="Dimasi N."/>
            <person name="McCormick J.K."/>
            <person name="Martin R."/>
            <person name="Schuck P."/>
            <person name="Schlievert P.M."/>
            <person name="Mariuzza R.A."/>
        </authorList>
    </citation>
    <scope>X-RAY CRYSTALLOGRAPHY (3.2 ANGSTROMS) OF 221-233 IN COMPLEX WITH HLA-DRA/HLA-DRB5 HETERODIMER AND STREPTOCOCCUS PYOGENES SPEC PEPTIDE</scope>
</reference>
<reference key="38">
    <citation type="journal article" date="2005" name="EMBO J.">
        <title>Structure of a human autoimmune TCR bound to a myelin basic protein self-peptide and a multiple sclerosis-associated MHC class II molecule.</title>
        <authorList>
            <person name="Li Y."/>
            <person name="Huang Y."/>
            <person name="Lue J."/>
            <person name="Quandt J.A."/>
            <person name="Martin R."/>
            <person name="Mariuzza R.A."/>
        </authorList>
    </citation>
    <scope>X-RAY CRYSTALLOGRAPHY (2.8 ANGSTROMS) OF 221-233 IN COMPLEX WITH HLA-DRA/HLA-DRB5 HETERODIMER AND TRAC</scope>
</reference>
<dbReference type="EMBL" id="M30047">
    <property type="protein sequence ID" value="AAA59559.1"/>
    <property type="molecule type" value="mRNA"/>
</dbReference>
<dbReference type="EMBL" id="M20009">
    <property type="protein sequence ID" value="AAA59561.1"/>
    <property type="molecule type" value="mRNA"/>
</dbReference>
<dbReference type="EMBL" id="M13577">
    <property type="protein sequence ID" value="AAA59562.1"/>
    <property type="molecule type" value="mRNA"/>
</dbReference>
<dbReference type="EMBL" id="M30516">
    <property type="protein sequence ID" value="AAA59563.1"/>
    <property type="molecule type" value="mRNA"/>
</dbReference>
<dbReference type="EMBL" id="M30515">
    <property type="protein sequence ID" value="AAA59564.1"/>
    <property type="molecule type" value="mRNA"/>
</dbReference>
<dbReference type="EMBL" id="X17286">
    <property type="protein sequence ID" value="CAA35179.1"/>
    <property type="molecule type" value="Genomic_DNA"/>
</dbReference>
<dbReference type="EMBL" id="X17287">
    <property type="protein sequence ID" value="CAA35179.1"/>
    <property type="status" value="JOINED"/>
    <property type="molecule type" value="Genomic_DNA"/>
</dbReference>
<dbReference type="EMBL" id="X17290">
    <property type="protein sequence ID" value="CAA35179.1"/>
    <property type="status" value="JOINED"/>
    <property type="molecule type" value="Genomic_DNA"/>
</dbReference>
<dbReference type="EMBL" id="X17288">
    <property type="protein sequence ID" value="CAA35179.1"/>
    <property type="status" value="JOINED"/>
    <property type="molecule type" value="Genomic_DNA"/>
</dbReference>
<dbReference type="EMBL" id="X17369">
    <property type="protein sequence ID" value="CAA35179.1"/>
    <property type="status" value="JOINED"/>
    <property type="molecule type" value="Genomic_DNA"/>
</dbReference>
<dbReference type="EMBL" id="X17289">
    <property type="protein sequence ID" value="CAA35179.1"/>
    <property type="status" value="JOINED"/>
    <property type="molecule type" value="Genomic_DNA"/>
</dbReference>
<dbReference type="EMBL" id="L18862">
    <property type="protein sequence ID" value="AAA72008.1"/>
    <property type="molecule type" value="Genomic_DNA"/>
</dbReference>
<dbReference type="EMBL" id="L18864">
    <property type="protein sequence ID" value="AAA72009.1"/>
    <property type="molecule type" value="Genomic_DNA"/>
</dbReference>
<dbReference type="EMBL" id="L18865">
    <property type="protein sequence ID" value="AAA72010.1"/>
    <property type="molecule type" value="Genomic_DNA"/>
</dbReference>
<dbReference type="EMBL" id="L18866">
    <property type="protein sequence ID" value="AAA72011.1"/>
    <property type="molecule type" value="Genomic_DNA"/>
</dbReference>
<dbReference type="EMBL" id="L41657">
    <property type="protein sequence ID" value="AAC41944.1"/>
    <property type="status" value="ALT_SEQ"/>
    <property type="molecule type" value="Genomic_DNA"/>
</dbReference>
<dbReference type="EMBL" id="CR536534">
    <property type="protein sequence ID" value="CAG38771.1"/>
    <property type="molecule type" value="mRNA"/>
</dbReference>
<dbReference type="EMBL" id="CR541919">
    <property type="protein sequence ID" value="CAG46717.1"/>
    <property type="molecule type" value="mRNA"/>
</dbReference>
<dbReference type="EMBL" id="CR627018">
    <property type="protein sequence ID" value="CAH10359.1"/>
    <property type="status" value="ALT_SEQ"/>
    <property type="molecule type" value="mRNA"/>
</dbReference>
<dbReference type="EMBL" id="AK128770">
    <property type="protein sequence ID" value="BAG54728.1"/>
    <property type="molecule type" value="mRNA"/>
</dbReference>
<dbReference type="EMBL" id="AK128788">
    <property type="protein sequence ID" value="BAG54734.1"/>
    <property type="molecule type" value="mRNA"/>
</dbReference>
<dbReference type="EMBL" id="AB208986">
    <property type="protein sequence ID" value="BAD92223.1"/>
    <property type="status" value="ALT_INIT"/>
    <property type="molecule type" value="mRNA"/>
</dbReference>
<dbReference type="EMBL" id="AC018529">
    <property type="status" value="NOT_ANNOTATED_CDS"/>
    <property type="molecule type" value="Genomic_DNA"/>
</dbReference>
<dbReference type="EMBL" id="AC093330">
    <property type="status" value="NOT_ANNOTATED_CDS"/>
    <property type="molecule type" value="Genomic_DNA"/>
</dbReference>
<dbReference type="EMBL" id="BC008749">
    <property type="protein sequence ID" value="AAH08749.3"/>
    <property type="molecule type" value="mRNA"/>
</dbReference>
<dbReference type="EMBL" id="BC065248">
    <property type="protein sequence ID" value="AAH65248.1"/>
    <property type="molecule type" value="mRNA"/>
</dbReference>
<dbReference type="EMBL" id="BC080654">
    <property type="protein sequence ID" value="AAH80654.1"/>
    <property type="molecule type" value="mRNA"/>
</dbReference>
<dbReference type="EMBL" id="BC101771">
    <property type="protein sequence ID" value="AAI01772.1"/>
    <property type="molecule type" value="mRNA"/>
</dbReference>
<dbReference type="EMBL" id="BC101773">
    <property type="protein sequence ID" value="AAI01774.1"/>
    <property type="molecule type" value="mRNA"/>
</dbReference>
<dbReference type="EMBL" id="BC143348">
    <property type="protein sequence ID" value="AAI43349.1"/>
    <property type="molecule type" value="mRNA"/>
</dbReference>
<dbReference type="EMBL" id="BC143350">
    <property type="protein sequence ID" value="AAI43351.1"/>
    <property type="molecule type" value="mRNA"/>
</dbReference>
<dbReference type="EMBL" id="M63599">
    <property type="protein sequence ID" value="AAA59560.1"/>
    <property type="molecule type" value="Genomic_DNA"/>
</dbReference>
<dbReference type="CCDS" id="CCDS12011.1">
    <molecule id="P02686-4"/>
</dbReference>
<dbReference type="CCDS" id="CCDS32847.1">
    <molecule id="P02686-3"/>
</dbReference>
<dbReference type="CCDS" id="CCDS42448.1">
    <molecule id="P02686-6"/>
</dbReference>
<dbReference type="CCDS" id="CCDS42449.1">
    <molecule id="P02686-5"/>
</dbReference>
<dbReference type="CCDS" id="CCDS42450.1">
    <molecule id="P02686-2"/>
</dbReference>
<dbReference type="PIR" id="A49635">
    <property type="entry name" value="A49635"/>
</dbReference>
<dbReference type="PIR" id="S10482">
    <property type="entry name" value="MBHUB"/>
</dbReference>
<dbReference type="RefSeq" id="NP_001020252.1">
    <molecule id="P02686-3"/>
    <property type="nucleotide sequence ID" value="NM_001025081.2"/>
</dbReference>
<dbReference type="RefSeq" id="NP_001020261.1">
    <molecule id="P02686-5"/>
    <property type="nucleotide sequence ID" value="NM_001025090.2"/>
</dbReference>
<dbReference type="RefSeq" id="NP_001020263.1">
    <molecule id="P02686-6"/>
    <property type="nucleotide sequence ID" value="NM_001025092.2"/>
</dbReference>
<dbReference type="RefSeq" id="NP_001020271.1">
    <molecule id="P02686-2"/>
    <property type="nucleotide sequence ID" value="NM_001025100.2"/>
</dbReference>
<dbReference type="RefSeq" id="NP_001020272.1">
    <molecule id="P02686-1"/>
    <property type="nucleotide sequence ID" value="NM_001025101.2"/>
</dbReference>
<dbReference type="RefSeq" id="NP_002376.1">
    <molecule id="P02686-4"/>
    <property type="nucleotide sequence ID" value="NM_002385.3"/>
</dbReference>
<dbReference type="RefSeq" id="XP_016881269.1">
    <property type="nucleotide sequence ID" value="XM_017025780.1"/>
</dbReference>
<dbReference type="PDB" id="1BX2">
    <property type="method" value="X-ray"/>
    <property type="resolution" value="2.60 A"/>
    <property type="chains" value="C/F=217-231"/>
</dbReference>
<dbReference type="PDB" id="1FV1">
    <property type="method" value="X-ray"/>
    <property type="resolution" value="1.90 A"/>
    <property type="chains" value="C/F=218-237"/>
</dbReference>
<dbReference type="PDB" id="1HQR">
    <property type="method" value="X-ray"/>
    <property type="resolution" value="3.20 A"/>
    <property type="chains" value="C=221-233"/>
</dbReference>
<dbReference type="PDB" id="1K2D">
    <property type="method" value="X-ray"/>
    <property type="resolution" value="2.20 A"/>
    <property type="chains" value="P=135-144"/>
</dbReference>
<dbReference type="PDB" id="1YMM">
    <property type="method" value="X-ray"/>
    <property type="resolution" value="3.50 A"/>
    <property type="chains" value="C=217-240"/>
</dbReference>
<dbReference type="PDB" id="1ZGL">
    <property type="method" value="X-ray"/>
    <property type="resolution" value="2.80 A"/>
    <property type="chains" value="C/F/I/L=221-233"/>
</dbReference>
<dbReference type="PDBsum" id="1BX2"/>
<dbReference type="PDBsum" id="1FV1"/>
<dbReference type="PDBsum" id="1HQR"/>
<dbReference type="PDBsum" id="1K2D"/>
<dbReference type="PDBsum" id="1YMM"/>
<dbReference type="PDBsum" id="1ZGL"/>
<dbReference type="BMRB" id="P02686"/>
<dbReference type="SMR" id="P02686"/>
<dbReference type="BioGRID" id="110325">
    <property type="interactions" value="128"/>
</dbReference>
<dbReference type="DIP" id="DIP-36624N"/>
<dbReference type="FunCoup" id="P02686">
    <property type="interactions" value="89"/>
</dbReference>
<dbReference type="IntAct" id="P02686">
    <property type="interactions" value="32"/>
</dbReference>
<dbReference type="MINT" id="P02686"/>
<dbReference type="STRING" id="9606.ENSP00000380958"/>
<dbReference type="GlyCosmos" id="P02686">
    <property type="glycosylation" value="1 site, 1 glycan"/>
</dbReference>
<dbReference type="GlyGen" id="P02686">
    <property type="glycosylation" value="3 sites, 1 O-linked glycan (1 site)"/>
</dbReference>
<dbReference type="iPTMnet" id="P02686"/>
<dbReference type="PhosphoSitePlus" id="P02686"/>
<dbReference type="SwissPalm" id="P02686"/>
<dbReference type="BioMuta" id="MBP"/>
<dbReference type="jPOST" id="P02686"/>
<dbReference type="MassIVE" id="P02686"/>
<dbReference type="PaxDb" id="9606-ENSP00000380958"/>
<dbReference type="PeptideAtlas" id="P02686"/>
<dbReference type="ProteomicsDB" id="51547">
    <molecule id="P02686-1"/>
</dbReference>
<dbReference type="ProteomicsDB" id="51548">
    <molecule id="P02686-2"/>
</dbReference>
<dbReference type="ProteomicsDB" id="51549">
    <molecule id="P02686-3"/>
</dbReference>
<dbReference type="ProteomicsDB" id="51550">
    <molecule id="P02686-4"/>
</dbReference>
<dbReference type="ProteomicsDB" id="51551">
    <molecule id="P02686-5"/>
</dbReference>
<dbReference type="ProteomicsDB" id="51552">
    <molecule id="P02686-6"/>
</dbReference>
<dbReference type="Pumba" id="P02686"/>
<dbReference type="ABCD" id="P02686">
    <property type="antibodies" value="5 sequenced antibodies"/>
</dbReference>
<dbReference type="Antibodypedia" id="3704">
    <property type="antibodies" value="1422 antibodies from 50 providers"/>
</dbReference>
<dbReference type="DNASU" id="4155"/>
<dbReference type="Ensembl" id="ENST00000355994.7">
    <molecule id="P02686-1"/>
    <property type="protein sequence ID" value="ENSP00000348273.2"/>
    <property type="gene ID" value="ENSG00000197971.16"/>
</dbReference>
<dbReference type="Ensembl" id="ENST00000359645.7">
    <molecule id="P02686-4"/>
    <property type="protein sequence ID" value="ENSP00000352667.3"/>
    <property type="gene ID" value="ENSG00000197971.16"/>
</dbReference>
<dbReference type="Ensembl" id="ENST00000382582.7">
    <molecule id="P02686-3"/>
    <property type="protein sequence ID" value="ENSP00000372025.3"/>
    <property type="gene ID" value="ENSG00000197971.16"/>
</dbReference>
<dbReference type="Ensembl" id="ENST00000397860.7">
    <molecule id="P02686-2"/>
    <property type="protein sequence ID" value="ENSP00000380958.3"/>
    <property type="gene ID" value="ENSG00000197971.16"/>
</dbReference>
<dbReference type="Ensembl" id="ENST00000397863.5">
    <molecule id="P02686-2"/>
    <property type="protein sequence ID" value="ENSP00000380961.1"/>
    <property type="gene ID" value="ENSG00000197971.16"/>
</dbReference>
<dbReference type="Ensembl" id="ENST00000397865.9">
    <molecule id="P02686-6"/>
    <property type="protein sequence ID" value="ENSP00000380963.5"/>
    <property type="gene ID" value="ENSG00000197971.16"/>
</dbReference>
<dbReference type="Ensembl" id="ENST00000397866.8">
    <molecule id="P02686-5"/>
    <property type="protein sequence ID" value="ENSP00000380964.4"/>
    <property type="gene ID" value="ENSG00000197971.16"/>
</dbReference>
<dbReference type="Ensembl" id="ENST00000580402.5">
    <molecule id="P02686-1"/>
    <property type="protein sequence ID" value="ENSP00000462223.1"/>
    <property type="gene ID" value="ENSG00000197971.16"/>
</dbReference>
<dbReference type="GeneID" id="4155"/>
<dbReference type="KEGG" id="hsa:4155"/>
<dbReference type="MANE-Select" id="ENST00000355994.7">
    <property type="protein sequence ID" value="ENSP00000348273.2"/>
    <property type="RefSeq nucleotide sequence ID" value="NM_001025101.2"/>
    <property type="RefSeq protein sequence ID" value="NP_001020272.1"/>
</dbReference>
<dbReference type="UCSC" id="uc002lml.4">
    <molecule id="P02686-1"/>
    <property type="organism name" value="human"/>
</dbReference>
<dbReference type="AGR" id="HGNC:6925"/>
<dbReference type="CTD" id="4155"/>
<dbReference type="DisGeNET" id="4155"/>
<dbReference type="GeneCards" id="MBP"/>
<dbReference type="HGNC" id="HGNC:6925">
    <property type="gene designation" value="MBP"/>
</dbReference>
<dbReference type="HPA" id="ENSG00000197971">
    <property type="expression patterns" value="Tissue enriched (brain)"/>
</dbReference>
<dbReference type="MIM" id="159430">
    <property type="type" value="gene"/>
</dbReference>
<dbReference type="neXtProt" id="NX_P02686"/>
<dbReference type="OpenTargets" id="ENSG00000197971"/>
<dbReference type="PharmGKB" id="PA30667"/>
<dbReference type="VEuPathDB" id="HostDB:ENSG00000197971"/>
<dbReference type="eggNOG" id="ENOG502S4SJ">
    <property type="taxonomic scope" value="Eukaryota"/>
</dbReference>
<dbReference type="GeneTree" id="ENSGT00390000014772"/>
<dbReference type="InParanoid" id="P02686"/>
<dbReference type="OMA" id="FRTIGNQ"/>
<dbReference type="OrthoDB" id="8862162at2759"/>
<dbReference type="PAN-GO" id="P02686">
    <property type="GO annotations" value="6 GO annotations based on evolutionary models"/>
</dbReference>
<dbReference type="PhylomeDB" id="P02686"/>
<dbReference type="TreeFam" id="TF333391"/>
<dbReference type="PathwayCommons" id="P02686"/>
<dbReference type="Reactome" id="R-HSA-9619665">
    <property type="pathway name" value="EGR2 and SOX10-mediated initiation of Schwann cell myelination"/>
</dbReference>
<dbReference type="SignaLink" id="P02686"/>
<dbReference type="SIGNOR" id="P02686"/>
<dbReference type="BioGRID-ORCS" id="4155">
    <property type="hits" value="15 hits in 1149 CRISPR screens"/>
</dbReference>
<dbReference type="CD-CODE" id="FB4E32DD">
    <property type="entry name" value="Presynaptic clusters and postsynaptic densities"/>
</dbReference>
<dbReference type="ChiTaRS" id="MBP">
    <property type="organism name" value="human"/>
</dbReference>
<dbReference type="EvolutionaryTrace" id="P02686"/>
<dbReference type="GeneWiki" id="Myelin_basic_protein"/>
<dbReference type="GenomeRNAi" id="4155"/>
<dbReference type="Pharos" id="P02686">
    <property type="development level" value="Tbio"/>
</dbReference>
<dbReference type="PRO" id="PR:P02686"/>
<dbReference type="Proteomes" id="UP000005640">
    <property type="component" value="Chromosome 18"/>
</dbReference>
<dbReference type="RNAct" id="P02686">
    <property type="molecule type" value="protein"/>
</dbReference>
<dbReference type="Bgee" id="ENSG00000197971">
    <property type="expression patterns" value="Expressed in pons and 214 other cell types or tissues"/>
</dbReference>
<dbReference type="ExpressionAtlas" id="P02686">
    <property type="expression patterns" value="baseline and differential"/>
</dbReference>
<dbReference type="GO" id="GO:0071944">
    <property type="term" value="C:cell periphery"/>
    <property type="evidence" value="ECO:0000318"/>
    <property type="project" value="GO_Central"/>
</dbReference>
<dbReference type="GO" id="GO:0009986">
    <property type="term" value="C:cell surface"/>
    <property type="evidence" value="ECO:0000250"/>
    <property type="project" value="ARUK-UCL"/>
</dbReference>
<dbReference type="GO" id="GO:0043218">
    <property type="term" value="C:compact myelin"/>
    <property type="evidence" value="ECO:0000318"/>
    <property type="project" value="GO_Central"/>
</dbReference>
<dbReference type="GO" id="GO:0005829">
    <property type="term" value="C:cytosol"/>
    <property type="evidence" value="ECO:0000304"/>
    <property type="project" value="Reactome"/>
</dbReference>
<dbReference type="GO" id="GO:0033269">
    <property type="term" value="C:internode region of axon"/>
    <property type="evidence" value="ECO:0000318"/>
    <property type="project" value="GO_Central"/>
</dbReference>
<dbReference type="GO" id="GO:0043209">
    <property type="term" value="C:myelin sheath"/>
    <property type="evidence" value="ECO:0000314"/>
    <property type="project" value="CAFA"/>
</dbReference>
<dbReference type="GO" id="GO:0043025">
    <property type="term" value="C:neuronal cell body"/>
    <property type="evidence" value="ECO:0000318"/>
    <property type="project" value="GO_Central"/>
</dbReference>
<dbReference type="GO" id="GO:0005634">
    <property type="term" value="C:nucleus"/>
    <property type="evidence" value="ECO:0007669"/>
    <property type="project" value="UniProtKB-SubCell"/>
</dbReference>
<dbReference type="GO" id="GO:0005886">
    <property type="term" value="C:plasma membrane"/>
    <property type="evidence" value="ECO:0007669"/>
    <property type="project" value="UniProtKB-KW"/>
</dbReference>
<dbReference type="GO" id="GO:0032991">
    <property type="term" value="C:protein-containing complex"/>
    <property type="evidence" value="ECO:0000314"/>
    <property type="project" value="CAFA"/>
</dbReference>
<dbReference type="GO" id="GO:0045202">
    <property type="term" value="C:synapse"/>
    <property type="evidence" value="ECO:0007669"/>
    <property type="project" value="GOC"/>
</dbReference>
<dbReference type="GO" id="GO:0005516">
    <property type="term" value="F:calmodulin binding"/>
    <property type="evidence" value="ECO:0000353"/>
    <property type="project" value="CAFA"/>
</dbReference>
<dbReference type="GO" id="GO:0008289">
    <property type="term" value="F:lipid binding"/>
    <property type="evidence" value="ECO:0000269"/>
    <property type="project" value="DisProt"/>
</dbReference>
<dbReference type="GO" id="GO:0002020">
    <property type="term" value="F:protease binding"/>
    <property type="evidence" value="ECO:0007669"/>
    <property type="project" value="Ensembl"/>
</dbReference>
<dbReference type="GO" id="GO:0019911">
    <property type="term" value="F:structural constituent of myelin sheath"/>
    <property type="evidence" value="ECO:0007669"/>
    <property type="project" value="InterPro"/>
</dbReference>
<dbReference type="GO" id="GO:0008366">
    <property type="term" value="P:axon ensheathment"/>
    <property type="evidence" value="ECO:0000304"/>
    <property type="project" value="ProtInc"/>
</dbReference>
<dbReference type="GO" id="GO:0007417">
    <property type="term" value="P:central nervous system development"/>
    <property type="evidence" value="ECO:0000304"/>
    <property type="project" value="ProtInc"/>
</dbReference>
<dbReference type="GO" id="GO:0007268">
    <property type="term" value="P:chemical synaptic transmission"/>
    <property type="evidence" value="ECO:0000304"/>
    <property type="project" value="ProtInc"/>
</dbReference>
<dbReference type="GO" id="GO:0006955">
    <property type="term" value="P:immune response"/>
    <property type="evidence" value="ECO:0000304"/>
    <property type="project" value="ProtInc"/>
</dbReference>
<dbReference type="GO" id="GO:0035633">
    <property type="term" value="P:maintenance of blood-brain barrier"/>
    <property type="evidence" value="ECO:0000314"/>
    <property type="project" value="CAFA"/>
</dbReference>
<dbReference type="GO" id="GO:0000165">
    <property type="term" value="P:MAPK cascade"/>
    <property type="evidence" value="ECO:0000314"/>
    <property type="project" value="CAFA"/>
</dbReference>
<dbReference type="GO" id="GO:0061024">
    <property type="term" value="P:membrane organization"/>
    <property type="evidence" value="ECO:0007669"/>
    <property type="project" value="Ensembl"/>
</dbReference>
<dbReference type="GO" id="GO:0042552">
    <property type="term" value="P:myelination"/>
    <property type="evidence" value="ECO:0000318"/>
    <property type="project" value="GO_Central"/>
</dbReference>
<dbReference type="GO" id="GO:0034115">
    <property type="term" value="P:negative regulation of heterotypic cell-cell adhesion"/>
    <property type="evidence" value="ECO:0000314"/>
    <property type="project" value="CAFA"/>
</dbReference>
<dbReference type="GO" id="GO:2000343">
    <property type="term" value="P:positive regulation of chemokine (C-X-C motif) ligand 2 production"/>
    <property type="evidence" value="ECO:0000314"/>
    <property type="project" value="CAFA"/>
</dbReference>
<dbReference type="GO" id="GO:0032755">
    <property type="term" value="P:positive regulation of interleukin-6 production"/>
    <property type="evidence" value="ECO:0000314"/>
    <property type="project" value="CAFA"/>
</dbReference>
<dbReference type="GO" id="GO:1904685">
    <property type="term" value="P:positive regulation of metalloendopeptidase activity"/>
    <property type="evidence" value="ECO:0000314"/>
    <property type="project" value="CAFA"/>
</dbReference>
<dbReference type="GO" id="GO:0009636">
    <property type="term" value="P:response to toxic substance"/>
    <property type="evidence" value="ECO:0007669"/>
    <property type="project" value="Ensembl"/>
</dbReference>
<dbReference type="GO" id="GO:0007605">
    <property type="term" value="P:sensory perception of sound"/>
    <property type="evidence" value="ECO:0007669"/>
    <property type="project" value="Ensembl"/>
</dbReference>
<dbReference type="GO" id="GO:0021762">
    <property type="term" value="P:substantia nigra development"/>
    <property type="evidence" value="ECO:0007007"/>
    <property type="project" value="UniProtKB"/>
</dbReference>
<dbReference type="DisProt" id="DP00236"/>
<dbReference type="DisProt" id="DP02078">
    <molecule id="P02686-5"/>
</dbReference>
<dbReference type="InterPro" id="IPR000548">
    <property type="entry name" value="Myelin_BP"/>
</dbReference>
<dbReference type="PANTHER" id="PTHR11429">
    <property type="entry name" value="MYELIN BASIC PROTEIN"/>
    <property type="match status" value="1"/>
</dbReference>
<dbReference type="PANTHER" id="PTHR11429:SF0">
    <property type="entry name" value="MYELIN BASIC PROTEIN"/>
    <property type="match status" value="1"/>
</dbReference>
<dbReference type="Pfam" id="PF01669">
    <property type="entry name" value="Myelin_MBP"/>
    <property type="match status" value="1"/>
</dbReference>
<dbReference type="PRINTS" id="PR00212">
    <property type="entry name" value="MYELINMBP"/>
</dbReference>
<dbReference type="PROSITE" id="PS00569">
    <property type="entry name" value="MYELIN_MBP"/>
    <property type="match status" value="1"/>
</dbReference>
<comment type="function">
    <text evidence="18">The classic group of MBP isoforms (isoform 4-isoform 14) are with PLP the most abundant protein components of the myelin membrane in the CNS. They have a role in both its formation and stabilization. The smaller isoforms might have an important role in remyelination of denuded axons in multiple sclerosis. The non-classic group of MBP isoforms (isoform 1-isoform 3/Golli-MBPs) may preferentially have a role in the early developing brain long before myelination, maybe as components of transcriptional complexes, and may also be involved in signaling pathways in T-cells and neural cells. Differential splicing events combined with optional post-translational modifications give a wide spectrum of isomers, with each of them potentially having a specialized function. Induces T-cell proliferation.</text>
</comment>
<comment type="subunit">
    <text evidence="8 9 11">Homodimer. Isoform 3 exists as a homodimer.</text>
</comment>
<comment type="interaction">
    <interactant intactId="EBI-947410">
        <id>P02686</id>
    </interactant>
    <interactant intactId="EBI-751587">
        <id>Q9GZU7</id>
        <label>CTDSP1</label>
    </interactant>
    <organismsDiffer>false</organismsDiffer>
    <experiments>6</experiments>
</comment>
<comment type="interaction">
    <interactant intactId="EBI-947410">
        <id>P02686</id>
    </interactant>
    <interactant intactId="EBI-2556886">
        <id>P14735</id>
        <label>IDE</label>
    </interactant>
    <organismsDiffer>false</organismsDiffer>
    <experiments>2</experiments>
</comment>
<comment type="interaction">
    <interactant intactId="EBI-7056012">
        <id>P02686-1</id>
    </interactant>
    <interactant intactId="EBI-7056031">
        <id>Q8I629</id>
        <label>PF3D7_1201600</label>
    </interactant>
    <organismsDiffer>true</organismsDiffer>
    <experiments>2</experiments>
</comment>
<comment type="interaction">
    <interactant intactId="EBI-7056012">
        <id>P02686-1</id>
    </interactant>
    <interactant intactId="EBI-2552433">
        <id>Q64702</id>
        <label>Plk4</label>
    </interactant>
    <organismsDiffer>true</organismsDiffer>
    <experiments>2</experiments>
</comment>
<comment type="interaction">
    <interactant intactId="EBI-12159027">
        <id>P02686-2</id>
    </interactant>
    <interactant intactId="EBI-77613">
        <id>P05067</id>
        <label>APP</label>
    </interactant>
    <organismsDiffer>false</organismsDiffer>
    <experiments>3</experiments>
</comment>
<comment type="interaction">
    <interactant intactId="EBI-12159027">
        <id>P02686-2</id>
    </interactant>
    <interactant intactId="EBI-751587">
        <id>Q9GZU7</id>
        <label>CTDSP1</label>
    </interactant>
    <organismsDiffer>false</organismsDiffer>
    <experiments>4</experiments>
</comment>
<comment type="interaction">
    <interactant intactId="EBI-12159027">
        <id>P02686-2</id>
    </interactant>
    <interactant intactId="EBI-12134515">
        <id>O15194-2</id>
        <label>CTDSPL</label>
    </interactant>
    <organismsDiffer>false</organismsDiffer>
    <experiments>3</experiments>
</comment>
<comment type="interaction">
    <interactant intactId="EBI-12159027">
        <id>P02686-2</id>
    </interactant>
    <interactant intactId="EBI-742388">
        <id>Q9H8W4</id>
        <label>PLEKHF2</label>
    </interactant>
    <organismsDiffer>false</organismsDiffer>
    <experiments>3</experiments>
</comment>
<comment type="interaction">
    <interactant intactId="EBI-15973992">
        <id>P02686-5</id>
    </interactant>
    <interactant intactId="EBI-397435">
        <id>P62158</id>
        <label>CALM3</label>
    </interactant>
    <organismsDiffer>false</organismsDiffer>
    <experiments>2</experiments>
</comment>
<comment type="subcellular location">
    <subcellularLocation>
        <location>Myelin membrane</location>
        <topology>Peripheral membrane protein</topology>
        <orientation>Cytoplasmic side</orientation>
    </subcellularLocation>
    <text>Cytoplasmic side of myelin.</text>
</comment>
<comment type="subcellular location">
    <molecule>Isoform 3</molecule>
    <subcellularLocation>
        <location evidence="12">Nucleus</location>
    </subcellularLocation>
    <text>Targeted to nucleus in oligodendrocytes.</text>
</comment>
<comment type="alternative products">
    <event type="alternative splicing"/>
    <isoform>
        <id>P02686-1</id>
        <name>1</name>
        <name>Golli-MBP1</name>
        <name>HOG7</name>
        <sequence type="displayed"/>
    </isoform>
    <isoform>
        <id>P02686-2</id>
        <name>2</name>
        <name>Golli-MBP2</name>
        <name>HOG5</name>
        <sequence type="described" ref="VSP_003311"/>
    </isoform>
    <isoform>
        <id>P02686-3</id>
        <name>3</name>
        <name>MBP1</name>
        <name>21.5 kDa</name>
        <sequence type="described" ref="VSP_003308 VSP_003309"/>
    </isoform>
    <isoform>
        <id>P02686-4</id>
        <name>4</name>
        <name>MBP2</name>
        <name>20.2 kDa</name>
        <sequence type="described" ref="VSP_003308 VSP_003309 VSP_003310"/>
    </isoform>
    <isoform>
        <id>P02686-5</id>
        <name>5</name>
        <name>MBP3</name>
        <name>18.5 kDa</name>
        <sequence type="described" ref="VSP_003308"/>
    </isoform>
    <isoform>
        <id>P02686-6</id>
        <name>6</name>
        <name>MBP4</name>
        <name>17.2 kDa</name>
        <sequence type="described" ref="VSP_003308 VSP_003310"/>
    </isoform>
    <text>Additional isoforms seem to exist.</text>
</comment>
<comment type="tissue specificity">
    <text evidence="16">MBP isoforms are found in both the central and the peripheral nervous system, whereas Golli-MBP isoforms are expressed in fetal thymus, spleen and spinal cord, as well as in cell lines derived from the immune system.</text>
</comment>
<comment type="developmental stage">
    <text>Expression begins abruptly in 14-16 week old fetuses. Even smaller isoforms seem to be produced during embryogenesis; some of these persisting in the adult. Isoform 4 expression is more evident at 16 weeks and its relative proportion declines thereafter.</text>
</comment>
<comment type="PTM">
    <text evidence="13 14 15">Several charge isomers of MBP; C1 (the most cationic, least modified, and most abundant form), C2, C3, C4, C5, C6, C7, C8-A and C8-B (the least cationic form); are produced as a result of optional PTM, such as phosphorylation, deamidation of glutamine or asparagine, arginine citrullination and methylation. C8-A and C8-B contain each two mass isoforms termed C8-A(H), C8-A(L), C8-B(H) and C8-B(L), (H) standing for higher and (L) for lower molecular weight. C3, C4 and C5 are phosphorylated. The ratio of methylated arginine residues decreases during aging, making the protein more cationic.</text>
</comment>
<comment type="PTM">
    <text>The N-terminal alanine is acetylated (isoform 3, isoform 4, isoform 5 and isoform 6).</text>
</comment>
<comment type="PTM">
    <text>Arg-241 was found to be 6% monomethylated and 60% symmetrically dimethylated.</text>
</comment>
<comment type="PTM">
    <text evidence="10">Proteolytically cleaved in B cell lysosomes by cathepsin CTSG which degrades the major immunogenic MBP epitope and prevents the activation of MBP-specific autoreactive T cells.</text>
</comment>
<comment type="PTM">
    <text>Phosphorylated by TAOK2, VRK2, MAPK11, MAPK12, MAPK14 and MINK1.</text>
</comment>
<comment type="disease">
    <text>The reduction in the surface charge of citrullinated and/or methylated MBP could result in a weakened attachment to the myelin membrane. This mechanism could be operative in demyelinating diseases such as chronical multiple sclerosis (MS), and fulminating MS (Marburg disease).</text>
</comment>
<comment type="miscellaneous">
    <molecule>Isoform 3</molecule>
    <text evidence="27">Contains a non-traditional PY nuclear localization signal. Mutagenesis of Cys-81 to Ser prevents dimerization.</text>
</comment>
<comment type="similarity">
    <text evidence="27">Belongs to the myelin basic protein family.</text>
</comment>
<comment type="sequence caution" evidence="27">
    <conflict type="miscellaneous discrepancy">
        <sequence resource="EMBL-CDS" id="AAC41944"/>
    </conflict>
    <text>Contaminating sequence. The C-terminus contains a Histidine tag.</text>
</comment>
<comment type="sequence caution" evidence="27">
    <conflict type="erroneous initiation">
        <sequence resource="EMBL-CDS" id="BAD92223"/>
    </conflict>
    <text>Extended N-terminus.</text>
</comment>
<comment type="sequence caution" evidence="27">
    <conflict type="miscellaneous discrepancy">
        <sequence resource="EMBL-CDS" id="CAH10359"/>
    </conflict>
    <text>wrong intron-exon boundaries.</text>
</comment>
<comment type="online information" name="Wikipedia">
    <link uri="https://en.wikipedia.org/wiki/Myelin_basic_protein"/>
    <text>Myelin basic protein entry</text>
</comment>
<keyword id="KW-0002">3D-structure</keyword>
<keyword id="KW-0007">Acetylation</keyword>
<keyword id="KW-0025">Alternative splicing</keyword>
<keyword id="KW-0069">Autoimmune encephalomyelitis</keyword>
<keyword id="KW-1003">Cell membrane</keyword>
<keyword id="KW-0164">Citrullination</keyword>
<keyword id="KW-0903">Direct protein sequencing</keyword>
<keyword id="KW-0472">Membrane</keyword>
<keyword id="KW-0488">Methylation</keyword>
<keyword id="KW-0539">Nucleus</keyword>
<keyword id="KW-0597">Phosphoprotein</keyword>
<keyword id="KW-1267">Proteomics identification</keyword>
<keyword id="KW-1185">Reference proteome</keyword>
<protein>
    <recommendedName>
        <fullName>Myelin basic protein</fullName>
        <shortName>MBP</shortName>
    </recommendedName>
    <alternativeName>
        <fullName>Myelin A1 protein</fullName>
    </alternativeName>
    <alternativeName>
        <fullName>Myelin membrane encephalitogenic protein</fullName>
    </alternativeName>
</protein>
<organism>
    <name type="scientific">Homo sapiens</name>
    <name type="common">Human</name>
    <dbReference type="NCBI Taxonomy" id="9606"/>
    <lineage>
        <taxon>Eukaryota</taxon>
        <taxon>Metazoa</taxon>
        <taxon>Chordata</taxon>
        <taxon>Craniata</taxon>
        <taxon>Vertebrata</taxon>
        <taxon>Euteleostomi</taxon>
        <taxon>Mammalia</taxon>
        <taxon>Eutheria</taxon>
        <taxon>Euarchontoglires</taxon>
        <taxon>Primates</taxon>
        <taxon>Haplorrhini</taxon>
        <taxon>Catarrhini</taxon>
        <taxon>Hominidae</taxon>
        <taxon>Homo</taxon>
    </lineage>
</organism>